<protein>
    <recommendedName>
        <fullName evidence="1">3-isopropylmalate dehydratase large subunit</fullName>
        <ecNumber evidence="1">4.2.1.33</ecNumber>
    </recommendedName>
    <alternativeName>
        <fullName evidence="1">Alpha-IPM isomerase</fullName>
        <shortName evidence="1">IPMI</shortName>
    </alternativeName>
    <alternativeName>
        <fullName evidence="1">Isopropylmalate isomerase</fullName>
    </alternativeName>
</protein>
<name>LEUC_ALTMD</name>
<gene>
    <name evidence="1" type="primary">leuC</name>
    <name type="ordered locus">MADE_1004695</name>
</gene>
<comment type="function">
    <text evidence="1">Catalyzes the isomerization between 2-isopropylmalate and 3-isopropylmalate, via the formation of 2-isopropylmaleate.</text>
</comment>
<comment type="catalytic activity">
    <reaction evidence="1">
        <text>(2R,3S)-3-isopropylmalate = (2S)-2-isopropylmalate</text>
        <dbReference type="Rhea" id="RHEA:32287"/>
        <dbReference type="ChEBI" id="CHEBI:1178"/>
        <dbReference type="ChEBI" id="CHEBI:35121"/>
        <dbReference type="EC" id="4.2.1.33"/>
    </reaction>
</comment>
<comment type="cofactor">
    <cofactor evidence="1">
        <name>[4Fe-4S] cluster</name>
        <dbReference type="ChEBI" id="CHEBI:49883"/>
    </cofactor>
    <text evidence="1">Binds 1 [4Fe-4S] cluster per subunit.</text>
</comment>
<comment type="pathway">
    <text evidence="1">Amino-acid biosynthesis; L-leucine biosynthesis; L-leucine from 3-methyl-2-oxobutanoate: step 2/4.</text>
</comment>
<comment type="subunit">
    <text evidence="1">Heterodimer of LeuC and LeuD.</text>
</comment>
<comment type="similarity">
    <text evidence="1">Belongs to the aconitase/IPM isomerase family. LeuC type 1 subfamily.</text>
</comment>
<proteinExistence type="inferred from homology"/>
<dbReference type="EC" id="4.2.1.33" evidence="1"/>
<dbReference type="EMBL" id="CP001103">
    <property type="protein sequence ID" value="AEA97085.1"/>
    <property type="molecule type" value="Genomic_DNA"/>
</dbReference>
<dbReference type="RefSeq" id="WP_012517439.1">
    <property type="nucleotide sequence ID" value="NC_011138.3"/>
</dbReference>
<dbReference type="SMR" id="B4RVU9"/>
<dbReference type="KEGG" id="amc:MADE_1004695"/>
<dbReference type="HOGENOM" id="CLU_006714_3_4_6"/>
<dbReference type="UniPathway" id="UPA00048">
    <property type="reaction ID" value="UER00071"/>
</dbReference>
<dbReference type="Proteomes" id="UP000001870">
    <property type="component" value="Chromosome"/>
</dbReference>
<dbReference type="GO" id="GO:0003861">
    <property type="term" value="F:3-isopropylmalate dehydratase activity"/>
    <property type="evidence" value="ECO:0007669"/>
    <property type="project" value="UniProtKB-UniRule"/>
</dbReference>
<dbReference type="GO" id="GO:0051539">
    <property type="term" value="F:4 iron, 4 sulfur cluster binding"/>
    <property type="evidence" value="ECO:0007669"/>
    <property type="project" value="UniProtKB-KW"/>
</dbReference>
<dbReference type="GO" id="GO:0046872">
    <property type="term" value="F:metal ion binding"/>
    <property type="evidence" value="ECO:0007669"/>
    <property type="project" value="UniProtKB-KW"/>
</dbReference>
<dbReference type="GO" id="GO:0009098">
    <property type="term" value="P:L-leucine biosynthetic process"/>
    <property type="evidence" value="ECO:0007669"/>
    <property type="project" value="UniProtKB-UniRule"/>
</dbReference>
<dbReference type="CDD" id="cd01583">
    <property type="entry name" value="IPMI"/>
    <property type="match status" value="1"/>
</dbReference>
<dbReference type="FunFam" id="3.30.499.10:FF:000007">
    <property type="entry name" value="3-isopropylmalate dehydratase large subunit"/>
    <property type="match status" value="1"/>
</dbReference>
<dbReference type="Gene3D" id="3.30.499.10">
    <property type="entry name" value="Aconitase, domain 3"/>
    <property type="match status" value="2"/>
</dbReference>
<dbReference type="HAMAP" id="MF_01026">
    <property type="entry name" value="LeuC_type1"/>
    <property type="match status" value="1"/>
</dbReference>
<dbReference type="InterPro" id="IPR004430">
    <property type="entry name" value="3-IsopropMal_deHydase_lsu"/>
</dbReference>
<dbReference type="InterPro" id="IPR015931">
    <property type="entry name" value="Acnase/IPM_dHydase_lsu_aba_1/3"/>
</dbReference>
<dbReference type="InterPro" id="IPR001030">
    <property type="entry name" value="Acoase/IPM_deHydtase_lsu_aba"/>
</dbReference>
<dbReference type="InterPro" id="IPR018136">
    <property type="entry name" value="Aconitase_4Fe-4S_BS"/>
</dbReference>
<dbReference type="InterPro" id="IPR036008">
    <property type="entry name" value="Aconitase_4Fe-4S_dom"/>
</dbReference>
<dbReference type="InterPro" id="IPR050067">
    <property type="entry name" value="IPM_dehydratase_rel_enz"/>
</dbReference>
<dbReference type="InterPro" id="IPR033941">
    <property type="entry name" value="IPMI_cat"/>
</dbReference>
<dbReference type="NCBIfam" id="TIGR00170">
    <property type="entry name" value="leuC"/>
    <property type="match status" value="1"/>
</dbReference>
<dbReference type="NCBIfam" id="NF004016">
    <property type="entry name" value="PRK05478.1"/>
    <property type="match status" value="1"/>
</dbReference>
<dbReference type="NCBIfam" id="NF009116">
    <property type="entry name" value="PRK12466.1"/>
    <property type="match status" value="1"/>
</dbReference>
<dbReference type="PANTHER" id="PTHR43822:SF9">
    <property type="entry name" value="3-ISOPROPYLMALATE DEHYDRATASE"/>
    <property type="match status" value="1"/>
</dbReference>
<dbReference type="PANTHER" id="PTHR43822">
    <property type="entry name" value="HOMOACONITASE, MITOCHONDRIAL-RELATED"/>
    <property type="match status" value="1"/>
</dbReference>
<dbReference type="Pfam" id="PF00330">
    <property type="entry name" value="Aconitase"/>
    <property type="match status" value="1"/>
</dbReference>
<dbReference type="PRINTS" id="PR00415">
    <property type="entry name" value="ACONITASE"/>
</dbReference>
<dbReference type="SUPFAM" id="SSF53732">
    <property type="entry name" value="Aconitase iron-sulfur domain"/>
    <property type="match status" value="1"/>
</dbReference>
<dbReference type="PROSITE" id="PS00450">
    <property type="entry name" value="ACONITASE_1"/>
    <property type="match status" value="1"/>
</dbReference>
<dbReference type="PROSITE" id="PS01244">
    <property type="entry name" value="ACONITASE_2"/>
    <property type="match status" value="1"/>
</dbReference>
<reference key="1">
    <citation type="journal article" date="2008" name="ISME J.">
        <title>Comparative genomics of two ecotypes of the marine planktonic copiotroph Alteromonas macleodii suggests alternative lifestyles associated with different kinds of particulate organic matter.</title>
        <authorList>
            <person name="Ivars-Martinez E."/>
            <person name="Martin-Cuadrado A.-B."/>
            <person name="D'Auria G."/>
            <person name="Mira A."/>
            <person name="Ferriera S."/>
            <person name="Johnson J."/>
            <person name="Friedman R."/>
            <person name="Rodriguez-Valera F."/>
        </authorList>
    </citation>
    <scope>NUCLEOTIDE SEQUENCE [LARGE SCALE GENOMIC DNA]</scope>
    <source>
        <strain>DSM 17117 / CIP 110805 / LMG 28347 / Deep ecotype</strain>
    </source>
</reference>
<accession>B4RVU9</accession>
<accession>F2GBT4</accession>
<sequence>MAKTLYDKVWQAHIIDQIGEDSLIYIDRHLIHEVTSPQAFAGLNEKGRKVRRPDRTVGTMDHSISTRSLAIDACGPANALQLQTLAKNCEEHNIQLFPVGHQKQGIVHVMGPELGLIQPGMTVVCGDSHTATHGAFGALAFGIGTSQVEHVLATQTLKQSRAKSMLINVNGKLPVGITAKDIILAIIGKIGHAGATGHVIEYAGEAIRGLSMEERMTVCNMSIEAGAKAGLVAPDEKTFAYLEGREYAPKGQDWEDAVAYWKTLYTEEGAKFDTVVELEAADIAPQVTWGTNPGQVIGVNTPVPAPEDFSDPIEKESAVKALEYMGLKPGEKLADIPVNHVFIGSCTNGRIEDMRAAAQVAKRGKVADSVTAIVVPGSGAVKRQAEAEGLDKIFTDAGFEWRLPGCSMCLGMNDDKLVAGDRCASTSNRNFEGRQGRGARTHLVSPAMAAAAAITGRFADVRDYQE</sequence>
<organism>
    <name type="scientific">Alteromonas mediterranea (strain DSM 17117 / CIP 110805 / LMG 28347 / Deep ecotype)</name>
    <dbReference type="NCBI Taxonomy" id="1774373"/>
    <lineage>
        <taxon>Bacteria</taxon>
        <taxon>Pseudomonadati</taxon>
        <taxon>Pseudomonadota</taxon>
        <taxon>Gammaproteobacteria</taxon>
        <taxon>Alteromonadales</taxon>
        <taxon>Alteromonadaceae</taxon>
        <taxon>Alteromonas/Salinimonas group</taxon>
        <taxon>Alteromonas</taxon>
    </lineage>
</organism>
<evidence type="ECO:0000255" key="1">
    <source>
        <dbReference type="HAMAP-Rule" id="MF_01026"/>
    </source>
</evidence>
<feature type="chain" id="PRO_1000135663" description="3-isopropylmalate dehydratase large subunit">
    <location>
        <begin position="1"/>
        <end position="466"/>
    </location>
</feature>
<feature type="binding site" evidence="1">
    <location>
        <position position="346"/>
    </location>
    <ligand>
        <name>[4Fe-4S] cluster</name>
        <dbReference type="ChEBI" id="CHEBI:49883"/>
    </ligand>
</feature>
<feature type="binding site" evidence="1">
    <location>
        <position position="406"/>
    </location>
    <ligand>
        <name>[4Fe-4S] cluster</name>
        <dbReference type="ChEBI" id="CHEBI:49883"/>
    </ligand>
</feature>
<feature type="binding site" evidence="1">
    <location>
        <position position="409"/>
    </location>
    <ligand>
        <name>[4Fe-4S] cluster</name>
        <dbReference type="ChEBI" id="CHEBI:49883"/>
    </ligand>
</feature>
<keyword id="KW-0004">4Fe-4S</keyword>
<keyword id="KW-0028">Amino-acid biosynthesis</keyword>
<keyword id="KW-0100">Branched-chain amino acid biosynthesis</keyword>
<keyword id="KW-0408">Iron</keyword>
<keyword id="KW-0411">Iron-sulfur</keyword>
<keyword id="KW-0432">Leucine biosynthesis</keyword>
<keyword id="KW-0456">Lyase</keyword>
<keyword id="KW-0479">Metal-binding</keyword>